<proteinExistence type="inferred from homology"/>
<accession>A0KHG3</accession>
<protein>
    <recommendedName>
        <fullName evidence="1">Small ribosomal subunit protein uS2</fullName>
    </recommendedName>
    <alternativeName>
        <fullName evidence="2">30S ribosomal protein S2</fullName>
    </alternativeName>
</protein>
<sequence>MAKVSMRDMLQAGVHFGHQTRYWNPKMKSYIFGARSKVHIINLEKTVPMFDDAMNFISSVAAKKGKVLFVGTKRAASEAVKEAAERCDQFYVNHRWLGGMLTNWKTVRQSIKRLKDLETQSQDGTFDKLTKKEALMRTREMEKLEKSLGGIKNMGGLPDVLFVVDADHEHIAIKEANNLGIPVVSIVDTNSNPDGVDYVIPGNDDAIRAVQLYLNAAADTVLEARAQDIVVQAEQDGFVEAE</sequence>
<reference key="1">
    <citation type="journal article" date="2006" name="J. Bacteriol.">
        <title>Genome sequence of Aeromonas hydrophila ATCC 7966T: jack of all trades.</title>
        <authorList>
            <person name="Seshadri R."/>
            <person name="Joseph S.W."/>
            <person name="Chopra A.K."/>
            <person name="Sha J."/>
            <person name="Shaw J."/>
            <person name="Graf J."/>
            <person name="Haft D.H."/>
            <person name="Wu M."/>
            <person name="Ren Q."/>
            <person name="Rosovitz M.J."/>
            <person name="Madupu R."/>
            <person name="Tallon L."/>
            <person name="Kim M."/>
            <person name="Jin S."/>
            <person name="Vuong H."/>
            <person name="Stine O.C."/>
            <person name="Ali A."/>
            <person name="Horneman A.J."/>
            <person name="Heidelberg J.F."/>
        </authorList>
    </citation>
    <scope>NUCLEOTIDE SEQUENCE [LARGE SCALE GENOMIC DNA]</scope>
    <source>
        <strain>ATCC 7966 / DSM 30187 / BCRC 13018 / CCUG 14551 / JCM 1027 / KCTC 2358 / NCIMB 9240 / NCTC 8049</strain>
    </source>
</reference>
<organism>
    <name type="scientific">Aeromonas hydrophila subsp. hydrophila (strain ATCC 7966 / DSM 30187 / BCRC 13018 / CCUG 14551 / JCM 1027 / KCTC 2358 / NCIMB 9240 / NCTC 8049)</name>
    <dbReference type="NCBI Taxonomy" id="380703"/>
    <lineage>
        <taxon>Bacteria</taxon>
        <taxon>Pseudomonadati</taxon>
        <taxon>Pseudomonadota</taxon>
        <taxon>Gammaproteobacteria</taxon>
        <taxon>Aeromonadales</taxon>
        <taxon>Aeromonadaceae</taxon>
        <taxon>Aeromonas</taxon>
    </lineage>
</organism>
<gene>
    <name evidence="1" type="primary">rpsB</name>
    <name type="ordered locus">AHA_1173</name>
</gene>
<keyword id="KW-1185">Reference proteome</keyword>
<keyword id="KW-0687">Ribonucleoprotein</keyword>
<keyword id="KW-0689">Ribosomal protein</keyword>
<name>RS2_AERHH</name>
<comment type="similarity">
    <text evidence="1">Belongs to the universal ribosomal protein uS2 family.</text>
</comment>
<dbReference type="EMBL" id="CP000462">
    <property type="protein sequence ID" value="ABK39450.1"/>
    <property type="molecule type" value="Genomic_DNA"/>
</dbReference>
<dbReference type="RefSeq" id="WP_005303470.1">
    <property type="nucleotide sequence ID" value="NC_008570.1"/>
</dbReference>
<dbReference type="RefSeq" id="YP_855714.1">
    <property type="nucleotide sequence ID" value="NC_008570.1"/>
</dbReference>
<dbReference type="SMR" id="A0KHG3"/>
<dbReference type="STRING" id="380703.AHA_1173"/>
<dbReference type="EnsemblBacteria" id="ABK39450">
    <property type="protein sequence ID" value="ABK39450"/>
    <property type="gene ID" value="AHA_1173"/>
</dbReference>
<dbReference type="GeneID" id="92808905"/>
<dbReference type="KEGG" id="aha:AHA_1173"/>
<dbReference type="PATRIC" id="fig|380703.7.peg.1180"/>
<dbReference type="eggNOG" id="COG0052">
    <property type="taxonomic scope" value="Bacteria"/>
</dbReference>
<dbReference type="HOGENOM" id="CLU_040318_1_2_6"/>
<dbReference type="OrthoDB" id="9808036at2"/>
<dbReference type="PRO" id="PR:A0KHG3"/>
<dbReference type="Proteomes" id="UP000000756">
    <property type="component" value="Chromosome"/>
</dbReference>
<dbReference type="GO" id="GO:0022627">
    <property type="term" value="C:cytosolic small ribosomal subunit"/>
    <property type="evidence" value="ECO:0007669"/>
    <property type="project" value="TreeGrafter"/>
</dbReference>
<dbReference type="GO" id="GO:0003735">
    <property type="term" value="F:structural constituent of ribosome"/>
    <property type="evidence" value="ECO:0007669"/>
    <property type="project" value="InterPro"/>
</dbReference>
<dbReference type="GO" id="GO:0006412">
    <property type="term" value="P:translation"/>
    <property type="evidence" value="ECO:0007669"/>
    <property type="project" value="UniProtKB-UniRule"/>
</dbReference>
<dbReference type="CDD" id="cd01425">
    <property type="entry name" value="RPS2"/>
    <property type="match status" value="1"/>
</dbReference>
<dbReference type="FunFam" id="1.10.287.610:FF:000001">
    <property type="entry name" value="30S ribosomal protein S2"/>
    <property type="match status" value="1"/>
</dbReference>
<dbReference type="Gene3D" id="3.40.50.10490">
    <property type="entry name" value="Glucose-6-phosphate isomerase like protein, domain 1"/>
    <property type="match status" value="1"/>
</dbReference>
<dbReference type="Gene3D" id="1.10.287.610">
    <property type="entry name" value="Helix hairpin bin"/>
    <property type="match status" value="1"/>
</dbReference>
<dbReference type="HAMAP" id="MF_00291_B">
    <property type="entry name" value="Ribosomal_uS2_B"/>
    <property type="match status" value="1"/>
</dbReference>
<dbReference type="InterPro" id="IPR001865">
    <property type="entry name" value="Ribosomal_uS2"/>
</dbReference>
<dbReference type="InterPro" id="IPR005706">
    <property type="entry name" value="Ribosomal_uS2_bac/mit/plastid"/>
</dbReference>
<dbReference type="InterPro" id="IPR018130">
    <property type="entry name" value="Ribosomal_uS2_CS"/>
</dbReference>
<dbReference type="InterPro" id="IPR023591">
    <property type="entry name" value="Ribosomal_uS2_flav_dom_sf"/>
</dbReference>
<dbReference type="NCBIfam" id="TIGR01011">
    <property type="entry name" value="rpsB_bact"/>
    <property type="match status" value="1"/>
</dbReference>
<dbReference type="PANTHER" id="PTHR12534">
    <property type="entry name" value="30S RIBOSOMAL PROTEIN S2 PROKARYOTIC AND ORGANELLAR"/>
    <property type="match status" value="1"/>
</dbReference>
<dbReference type="PANTHER" id="PTHR12534:SF0">
    <property type="entry name" value="SMALL RIBOSOMAL SUBUNIT PROTEIN US2M"/>
    <property type="match status" value="1"/>
</dbReference>
<dbReference type="Pfam" id="PF00318">
    <property type="entry name" value="Ribosomal_S2"/>
    <property type="match status" value="1"/>
</dbReference>
<dbReference type="PRINTS" id="PR00395">
    <property type="entry name" value="RIBOSOMALS2"/>
</dbReference>
<dbReference type="SUPFAM" id="SSF52313">
    <property type="entry name" value="Ribosomal protein S2"/>
    <property type="match status" value="1"/>
</dbReference>
<dbReference type="PROSITE" id="PS00962">
    <property type="entry name" value="RIBOSOMAL_S2_1"/>
    <property type="match status" value="1"/>
</dbReference>
<dbReference type="PROSITE" id="PS00963">
    <property type="entry name" value="RIBOSOMAL_S2_2"/>
    <property type="match status" value="1"/>
</dbReference>
<evidence type="ECO:0000255" key="1">
    <source>
        <dbReference type="HAMAP-Rule" id="MF_00291"/>
    </source>
</evidence>
<evidence type="ECO:0000305" key="2"/>
<feature type="chain" id="PRO_1000003881" description="Small ribosomal subunit protein uS2">
    <location>
        <begin position="1"/>
        <end position="242"/>
    </location>
</feature>